<comment type="function">
    <text evidence="1">The heterodimer acts as both an ATP-dependent DNA helicase and an ATP-dependent, dual-direction single-stranded exonuclease. Recognizes the chi site generating a DNA molecule suitable for the initiation of homologous recombination. The AddB subunit has 5' -&gt; 3' nuclease activity but not helicase activity.</text>
</comment>
<comment type="cofactor">
    <cofactor evidence="1">
        <name>Mg(2+)</name>
        <dbReference type="ChEBI" id="CHEBI:18420"/>
    </cofactor>
</comment>
<comment type="cofactor">
    <cofactor evidence="1">
        <name>[4Fe-4S] cluster</name>
        <dbReference type="ChEBI" id="CHEBI:49883"/>
    </cofactor>
    <text evidence="1">Binds 1 [4Fe-4S] cluster.</text>
</comment>
<comment type="subunit">
    <text evidence="1">Heterodimer of AddA and AddB.</text>
</comment>
<comment type="miscellaneous">
    <text evidence="1">Despite having conserved helicase domains, this subunit does not have helicase activity.</text>
</comment>
<comment type="similarity">
    <text evidence="1">Belongs to the helicase family. AddB/RexB type 1 subfamily.</text>
</comment>
<sequence>MTLHAYLGRAGTGKSTKMLTEIKQKMKADPLGDPIILIAPTQSTFQLEQAFVNDPELNGSLRTEVLHFERLSHRIFQEVGSYSEQKLSKAATEMMIYNIVQEQQKYLKLYQSQAKYYGFSEKLTEQIQDFKKYAVTPEHLEHFIADKNMQTRTKNKLEDIALIYREFEQRIQNEFITGEDSLQYFIDCMPKSEWLKRADIYIDGFHNFSTIEYLIIKGLIKYAKSVTIILTTDGNHDQFSLFRKPSEVLRHIEEIANELNISIERQYFNQLYRFNNQDLKHLEQEFDVLQINRVACQGHINILESATMREEINEIARRIIVDIRDKQLRYQDIAILYRDESYAYLFDSILPLYNIPYNIDTKRSMTHHPVMEMIRSLIEVIQSNWQVNPMLRLLKTDVLTASYLKSAYLVDLLENFVLERGIYGKRWLDDELFNVEHFSKMGRKAHKLTEDERNTFEQVVKLKKDVIDKILHFEKQMSQAETVKDFATAFYESMEYFELPNQLMTERDELDLNGNHEKAEEIDQIWNGLIQILDDLVLVFGDEPMSMERFLEVFDIGLEQLEFVMIPQTLDQVSIGTMDLAKVDNKQHVYLVGMNDGTMPQPVTASSLITDEEKKYFEQQANVELSPTSDILQMDEAFVCYVAMTRAKGDVTFSYSLMGSSGDDKEISPFLNQIQSLFNQLEITNIPQYHEVNPLSLMQHAKQTKITLFEALRAWLDDEIVADSWLDAYQVIRDSDHLNQGLDYLMSALTFDNETVKLGETLSKDLYGKEINASVSRFEGYQQCPFKHYASHGLKLNERTKYELQNFDLGDIFHSVLKYISERINGDFKQLDLKKIRQLTNEALEEILPKVQFNLLNSSAYYRYLSRRIGAIVETTLSALKYQGTYSKFMPKHFETSFRRKPRTNDELIAQTLTTTQGIPINIRGQIDRIDTYTKNDTSFVNIIDYKSSEGSATLDLTKVYYGMQMQMMTYMDIVLQNKQRLGLTDIVKPGGLLYFHVHEPRIKFKSWSDIDEDKLEQDLIKKFKLSGLVNADQTVIDALDIRLEPKFTSDIVPVGLNKDGSLSKRGSQVADEATIYKFIQHNKENFIETASNIMDGHTEVAPLKYKQKLPCAFCSYQSVCHVDGMIDSKRYRTVDETINPIEAIQNININDEFGGE</sequence>
<evidence type="ECO:0000255" key="1">
    <source>
        <dbReference type="HAMAP-Rule" id="MF_01452"/>
    </source>
</evidence>
<gene>
    <name evidence="1" type="primary">addB</name>
    <name type="ordered locus">SA0827</name>
</gene>
<proteinExistence type="inferred from homology"/>
<keyword id="KW-0004">4Fe-4S</keyword>
<keyword id="KW-0067">ATP-binding</keyword>
<keyword id="KW-0227">DNA damage</keyword>
<keyword id="KW-0234">DNA repair</keyword>
<keyword id="KW-0238">DNA-binding</keyword>
<keyword id="KW-0269">Exonuclease</keyword>
<keyword id="KW-0347">Helicase</keyword>
<keyword id="KW-0378">Hydrolase</keyword>
<keyword id="KW-0408">Iron</keyword>
<keyword id="KW-0411">Iron-sulfur</keyword>
<keyword id="KW-0479">Metal-binding</keyword>
<keyword id="KW-0540">Nuclease</keyword>
<keyword id="KW-0547">Nucleotide-binding</keyword>
<name>ADDB_STAAN</name>
<feature type="chain" id="PRO_0000379213" description="ATP-dependent helicase/deoxyribonuclease subunit B">
    <location>
        <begin position="1"/>
        <end position="1157"/>
    </location>
</feature>
<feature type="domain" description="UvrD-like helicase ATP-binding" evidence="1">
    <location>
        <begin position="1"/>
        <end position="275"/>
    </location>
</feature>
<feature type="domain" description="UvrD-like helicase C-terminal" evidence="1">
    <location>
        <begin position="269"/>
        <end position="583"/>
    </location>
</feature>
<feature type="binding site" evidence="1">
    <location>
        <begin position="8"/>
        <end position="15"/>
    </location>
    <ligand>
        <name>ATP</name>
        <dbReference type="ChEBI" id="CHEBI:30616"/>
    </ligand>
</feature>
<feature type="binding site" evidence="1">
    <location>
        <position position="784"/>
    </location>
    <ligand>
        <name>[4Fe-4S] cluster</name>
        <dbReference type="ChEBI" id="CHEBI:49883"/>
    </ligand>
</feature>
<feature type="binding site" evidence="1">
    <location>
        <position position="1112"/>
    </location>
    <ligand>
        <name>[4Fe-4S] cluster</name>
        <dbReference type="ChEBI" id="CHEBI:49883"/>
    </ligand>
</feature>
<feature type="binding site" evidence="1">
    <location>
        <position position="1115"/>
    </location>
    <ligand>
        <name>[4Fe-4S] cluster</name>
        <dbReference type="ChEBI" id="CHEBI:49883"/>
    </ligand>
</feature>
<feature type="binding site" evidence="1">
    <location>
        <position position="1121"/>
    </location>
    <ligand>
        <name>[4Fe-4S] cluster</name>
        <dbReference type="ChEBI" id="CHEBI:49883"/>
    </ligand>
</feature>
<protein>
    <recommendedName>
        <fullName evidence="1">ATP-dependent helicase/deoxyribonuclease subunit B</fullName>
        <ecNumber evidence="1">3.1.-.-</ecNumber>
    </recommendedName>
    <alternativeName>
        <fullName evidence="1">ATP-dependent helicase/nuclease subunit AddB</fullName>
    </alternativeName>
</protein>
<reference key="1">
    <citation type="journal article" date="2001" name="Lancet">
        <title>Whole genome sequencing of meticillin-resistant Staphylococcus aureus.</title>
        <authorList>
            <person name="Kuroda M."/>
            <person name="Ohta T."/>
            <person name="Uchiyama I."/>
            <person name="Baba T."/>
            <person name="Yuzawa H."/>
            <person name="Kobayashi I."/>
            <person name="Cui L."/>
            <person name="Oguchi A."/>
            <person name="Aoki K."/>
            <person name="Nagai Y."/>
            <person name="Lian J.-Q."/>
            <person name="Ito T."/>
            <person name="Kanamori M."/>
            <person name="Matsumaru H."/>
            <person name="Maruyama A."/>
            <person name="Murakami H."/>
            <person name="Hosoyama A."/>
            <person name="Mizutani-Ui Y."/>
            <person name="Takahashi N.K."/>
            <person name="Sawano T."/>
            <person name="Inoue R."/>
            <person name="Kaito C."/>
            <person name="Sekimizu K."/>
            <person name="Hirakawa H."/>
            <person name="Kuhara S."/>
            <person name="Goto S."/>
            <person name="Yabuzaki J."/>
            <person name="Kanehisa M."/>
            <person name="Yamashita A."/>
            <person name="Oshima K."/>
            <person name="Furuya K."/>
            <person name="Yoshino C."/>
            <person name="Shiba T."/>
            <person name="Hattori M."/>
            <person name="Ogasawara N."/>
            <person name="Hayashi H."/>
            <person name="Hiramatsu K."/>
        </authorList>
    </citation>
    <scope>NUCLEOTIDE SEQUENCE [LARGE SCALE GENOMIC DNA]</scope>
    <source>
        <strain>N315</strain>
    </source>
</reference>
<accession>Q7A6H5</accession>
<dbReference type="EC" id="3.1.-.-" evidence="1"/>
<dbReference type="EMBL" id="BA000018">
    <property type="protein sequence ID" value="BAB42066.1"/>
    <property type="molecule type" value="Genomic_DNA"/>
</dbReference>
<dbReference type="PIR" id="G89863">
    <property type="entry name" value="G89863"/>
</dbReference>
<dbReference type="RefSeq" id="WP_000172350.1">
    <property type="nucleotide sequence ID" value="NC_002745.2"/>
</dbReference>
<dbReference type="SMR" id="Q7A6H5"/>
<dbReference type="EnsemblBacteria" id="BAB42066">
    <property type="protein sequence ID" value="BAB42066"/>
    <property type="gene ID" value="BAB42066"/>
</dbReference>
<dbReference type="KEGG" id="sau:SA0827"/>
<dbReference type="HOGENOM" id="CLU_007838_0_0_9"/>
<dbReference type="GO" id="GO:0051539">
    <property type="term" value="F:4 iron, 4 sulfur cluster binding"/>
    <property type="evidence" value="ECO:0007669"/>
    <property type="project" value="UniProtKB-KW"/>
</dbReference>
<dbReference type="GO" id="GO:0008409">
    <property type="term" value="F:5'-3' exonuclease activity"/>
    <property type="evidence" value="ECO:0007669"/>
    <property type="project" value="UniProtKB-UniRule"/>
</dbReference>
<dbReference type="GO" id="GO:0005524">
    <property type="term" value="F:ATP binding"/>
    <property type="evidence" value="ECO:0007669"/>
    <property type="project" value="UniProtKB-UniRule"/>
</dbReference>
<dbReference type="GO" id="GO:0003690">
    <property type="term" value="F:double-stranded DNA binding"/>
    <property type="evidence" value="ECO:0007669"/>
    <property type="project" value="UniProtKB-UniRule"/>
</dbReference>
<dbReference type="GO" id="GO:0004386">
    <property type="term" value="F:helicase activity"/>
    <property type="evidence" value="ECO:0007669"/>
    <property type="project" value="UniProtKB-KW"/>
</dbReference>
<dbReference type="GO" id="GO:0046872">
    <property type="term" value="F:metal ion binding"/>
    <property type="evidence" value="ECO:0007669"/>
    <property type="project" value="UniProtKB-KW"/>
</dbReference>
<dbReference type="GO" id="GO:0000724">
    <property type="term" value="P:double-strand break repair via homologous recombination"/>
    <property type="evidence" value="ECO:0007669"/>
    <property type="project" value="UniProtKB-UniRule"/>
</dbReference>
<dbReference type="Gene3D" id="3.90.320.10">
    <property type="match status" value="1"/>
</dbReference>
<dbReference type="Gene3D" id="3.40.50.300">
    <property type="entry name" value="P-loop containing nucleotide triphosphate hydrolases"/>
    <property type="match status" value="4"/>
</dbReference>
<dbReference type="HAMAP" id="MF_01452">
    <property type="entry name" value="AddB_type1"/>
    <property type="match status" value="1"/>
</dbReference>
<dbReference type="InterPro" id="IPR049035">
    <property type="entry name" value="ADDB_N"/>
</dbReference>
<dbReference type="InterPro" id="IPR014140">
    <property type="entry name" value="DNA_helicase_suAddB"/>
</dbReference>
<dbReference type="InterPro" id="IPR014017">
    <property type="entry name" value="DNA_helicase_UvrD-like_C"/>
</dbReference>
<dbReference type="InterPro" id="IPR027417">
    <property type="entry name" value="P-loop_NTPase"/>
</dbReference>
<dbReference type="InterPro" id="IPR011604">
    <property type="entry name" value="PDDEXK-like_dom_sf"/>
</dbReference>
<dbReference type="InterPro" id="IPR038726">
    <property type="entry name" value="PDDEXK_AddAB-type"/>
</dbReference>
<dbReference type="NCBIfam" id="TIGR02773">
    <property type="entry name" value="addB_Gpos"/>
    <property type="match status" value="1"/>
</dbReference>
<dbReference type="PANTHER" id="PTHR30591">
    <property type="entry name" value="RECBCD ENZYME SUBUNIT RECC"/>
    <property type="match status" value="1"/>
</dbReference>
<dbReference type="PANTHER" id="PTHR30591:SF1">
    <property type="entry name" value="RECBCD ENZYME SUBUNIT RECC"/>
    <property type="match status" value="1"/>
</dbReference>
<dbReference type="Pfam" id="PF21445">
    <property type="entry name" value="ADDB_N"/>
    <property type="match status" value="1"/>
</dbReference>
<dbReference type="Pfam" id="PF12705">
    <property type="entry name" value="PDDEXK_1"/>
    <property type="match status" value="1"/>
</dbReference>
<dbReference type="Pfam" id="PF13361">
    <property type="entry name" value="UvrD_C"/>
    <property type="match status" value="1"/>
</dbReference>
<dbReference type="SUPFAM" id="SSF52540">
    <property type="entry name" value="P-loop containing nucleoside triphosphate hydrolases"/>
    <property type="match status" value="1"/>
</dbReference>
<dbReference type="PROSITE" id="PS51198">
    <property type="entry name" value="UVRD_HELICASE_ATP_BIND"/>
    <property type="match status" value="1"/>
</dbReference>
<dbReference type="PROSITE" id="PS51217">
    <property type="entry name" value="UVRD_HELICASE_CTER"/>
    <property type="match status" value="1"/>
</dbReference>
<organism>
    <name type="scientific">Staphylococcus aureus (strain N315)</name>
    <dbReference type="NCBI Taxonomy" id="158879"/>
    <lineage>
        <taxon>Bacteria</taxon>
        <taxon>Bacillati</taxon>
        <taxon>Bacillota</taxon>
        <taxon>Bacilli</taxon>
        <taxon>Bacillales</taxon>
        <taxon>Staphylococcaceae</taxon>
        <taxon>Staphylococcus</taxon>
    </lineage>
</organism>